<evidence type="ECO:0000250" key="1">
    <source>
        <dbReference type="UniProtKB" id="P62707"/>
    </source>
</evidence>
<evidence type="ECO:0000250" key="2">
    <source>
        <dbReference type="UniProtKB" id="Q9MAA2"/>
    </source>
</evidence>
<evidence type="ECO:0000255" key="3"/>
<evidence type="ECO:0000256" key="4">
    <source>
        <dbReference type="SAM" id="MobiDB-lite"/>
    </source>
</evidence>
<evidence type="ECO:0000305" key="5"/>
<evidence type="ECO:0000312" key="6">
    <source>
        <dbReference type="Araport" id="AT1G58280"/>
    </source>
</evidence>
<evidence type="ECO:0000312" key="7">
    <source>
        <dbReference type="EMBL" id="AAF82259.1"/>
    </source>
</evidence>
<protein>
    <recommendedName>
        <fullName evidence="5">Phosphoglycerate mutase-like protein 2</fullName>
    </recommendedName>
</protein>
<keyword id="KW-0025">Alternative splicing</keyword>
<keyword id="KW-0150">Chloroplast</keyword>
<keyword id="KW-0934">Plastid</keyword>
<keyword id="KW-1185">Reference proteome</keyword>
<keyword id="KW-0809">Transit peptide</keyword>
<accession>F4IBB2</accession>
<accession>F4IBB1</accession>
<accession>Q0WU57</accession>
<accession>Q9LQB8</accession>
<accession>Q9SLV2</accession>
<name>PGML2_ARATH</name>
<reference key="1">
    <citation type="journal article" date="2000" name="Nature">
        <title>Sequence and analysis of chromosome 1 of the plant Arabidopsis thaliana.</title>
        <authorList>
            <person name="Theologis A."/>
            <person name="Ecker J.R."/>
            <person name="Palm C.J."/>
            <person name="Federspiel N.A."/>
            <person name="Kaul S."/>
            <person name="White O."/>
            <person name="Alonso J."/>
            <person name="Altafi H."/>
            <person name="Araujo R."/>
            <person name="Bowman C.L."/>
            <person name="Brooks S.Y."/>
            <person name="Buehler E."/>
            <person name="Chan A."/>
            <person name="Chao Q."/>
            <person name="Chen H."/>
            <person name="Cheuk R.F."/>
            <person name="Chin C.W."/>
            <person name="Chung M.K."/>
            <person name="Conn L."/>
            <person name="Conway A.B."/>
            <person name="Conway A.R."/>
            <person name="Creasy T.H."/>
            <person name="Dewar K."/>
            <person name="Dunn P."/>
            <person name="Etgu P."/>
            <person name="Feldblyum T.V."/>
            <person name="Feng J.-D."/>
            <person name="Fong B."/>
            <person name="Fujii C.Y."/>
            <person name="Gill J.E."/>
            <person name="Goldsmith A.D."/>
            <person name="Haas B."/>
            <person name="Hansen N.F."/>
            <person name="Hughes B."/>
            <person name="Huizar L."/>
            <person name="Hunter J.L."/>
            <person name="Jenkins J."/>
            <person name="Johnson-Hopson C."/>
            <person name="Khan S."/>
            <person name="Khaykin E."/>
            <person name="Kim C.J."/>
            <person name="Koo H.L."/>
            <person name="Kremenetskaia I."/>
            <person name="Kurtz D.B."/>
            <person name="Kwan A."/>
            <person name="Lam B."/>
            <person name="Langin-Hooper S."/>
            <person name="Lee A."/>
            <person name="Lee J.M."/>
            <person name="Lenz C.A."/>
            <person name="Li J.H."/>
            <person name="Li Y.-P."/>
            <person name="Lin X."/>
            <person name="Liu S.X."/>
            <person name="Liu Z.A."/>
            <person name="Luros J.S."/>
            <person name="Maiti R."/>
            <person name="Marziali A."/>
            <person name="Militscher J."/>
            <person name="Miranda M."/>
            <person name="Nguyen M."/>
            <person name="Nierman W.C."/>
            <person name="Osborne B.I."/>
            <person name="Pai G."/>
            <person name="Peterson J."/>
            <person name="Pham P.K."/>
            <person name="Rizzo M."/>
            <person name="Rooney T."/>
            <person name="Rowley D."/>
            <person name="Sakano H."/>
            <person name="Salzberg S.L."/>
            <person name="Schwartz J.R."/>
            <person name="Shinn P."/>
            <person name="Southwick A.M."/>
            <person name="Sun H."/>
            <person name="Tallon L.J."/>
            <person name="Tambunga G."/>
            <person name="Toriumi M.J."/>
            <person name="Town C.D."/>
            <person name="Utterback T."/>
            <person name="Van Aken S."/>
            <person name="Vaysberg M."/>
            <person name="Vysotskaia V.S."/>
            <person name="Walker M."/>
            <person name="Wu D."/>
            <person name="Yu G."/>
            <person name="Fraser C.M."/>
            <person name="Venter J.C."/>
            <person name="Davis R.W."/>
        </authorList>
    </citation>
    <scope>NUCLEOTIDE SEQUENCE [LARGE SCALE GENOMIC DNA]</scope>
    <source>
        <strain>cv. Columbia</strain>
    </source>
</reference>
<reference key="2">
    <citation type="journal article" date="2017" name="Plant J.">
        <title>Araport11: a complete reannotation of the Arabidopsis thaliana reference genome.</title>
        <authorList>
            <person name="Cheng C.Y."/>
            <person name="Krishnakumar V."/>
            <person name="Chan A.P."/>
            <person name="Thibaud-Nissen F."/>
            <person name="Schobel S."/>
            <person name="Town C.D."/>
        </authorList>
    </citation>
    <scope>GENOME REANNOTATION</scope>
    <source>
        <strain>cv. Columbia</strain>
    </source>
</reference>
<reference key="3">
    <citation type="submission" date="2006-07" db="EMBL/GenBank/DDBJ databases">
        <title>Large-scale analysis of RIKEN Arabidopsis full-length (RAFL) cDNAs.</title>
        <authorList>
            <person name="Totoki Y."/>
            <person name="Seki M."/>
            <person name="Ishida J."/>
            <person name="Nakajima M."/>
            <person name="Enju A."/>
            <person name="Kamiya A."/>
            <person name="Narusaka M."/>
            <person name="Shin-i T."/>
            <person name="Nakagawa M."/>
            <person name="Sakamoto N."/>
            <person name="Oishi K."/>
            <person name="Kohara Y."/>
            <person name="Kobayashi M."/>
            <person name="Toyoda A."/>
            <person name="Sakaki Y."/>
            <person name="Sakurai T."/>
            <person name="Iida K."/>
            <person name="Akiyama K."/>
            <person name="Satou M."/>
            <person name="Toyoda T."/>
            <person name="Konagaya A."/>
            <person name="Carninci P."/>
            <person name="Kawai J."/>
            <person name="Hayashizaki Y."/>
            <person name="Shinozaki K."/>
        </authorList>
    </citation>
    <scope>NUCLEOTIDE SEQUENCE [LARGE SCALE MRNA] OF 6-343 (ISOFORM 1)</scope>
    <source>
        <strain>cv. Columbia</strain>
    </source>
</reference>
<reference key="4">
    <citation type="journal article" date="1999" name="Gene">
        <title>Isolation and analysis of cDNA within a 300 kb Arabidopsis thaliana genomic region located around the 100 map unit of chromosome 1.</title>
        <authorList>
            <person name="Kato A."/>
            <person name="Suzuki M."/>
            <person name="Kuwahara A."/>
            <person name="Ooe H."/>
            <person name="Higano-Inaba K."/>
            <person name="Komeda Y."/>
        </authorList>
    </citation>
    <scope>NUCLEOTIDE SEQUENCE [MRNA] OF 20-343 (ISOFORM 2)</scope>
</reference>
<feature type="transit peptide" description="Chloroplast" evidence="3">
    <location>
        <begin position="1"/>
        <end position="35"/>
    </location>
</feature>
<feature type="chain" id="PRO_0000430633" description="Phosphoglycerate mutase-like protein 2" evidence="3">
    <location>
        <begin position="36"/>
        <end position="343"/>
    </location>
</feature>
<feature type="region of interest" description="Disordered" evidence="4">
    <location>
        <begin position="322"/>
        <end position="343"/>
    </location>
</feature>
<feature type="active site" description="Tele-phosphohistidine intermediate" evidence="1">
    <location>
        <position position="65"/>
    </location>
</feature>
<feature type="active site" description="Proton donor/acceptor" evidence="1">
    <location>
        <position position="177"/>
    </location>
</feature>
<feature type="site" description="Transition state stabilizer" evidence="1">
    <location>
        <position position="273"/>
    </location>
</feature>
<feature type="splice variant" id="VSP_056878" description="In isoform 2.">
    <location>
        <begin position="180"/>
        <end position="204"/>
    </location>
</feature>
<feature type="sequence conflict" description="In Ref. 3; BAE99341." ref="3">
    <original>R</original>
    <variation>H</variation>
    <location>
        <position position="33"/>
    </location>
</feature>
<comment type="function">
    <text evidence="2">May play a role in carbohydrates metabolism.</text>
</comment>
<comment type="subcellular location">
    <subcellularLocation>
        <location evidence="3">Plastid</location>
        <location evidence="3">Chloroplast</location>
    </subcellularLocation>
</comment>
<comment type="alternative products">
    <event type="alternative splicing"/>
    <isoform>
        <id>F4IBB2-1</id>
        <name>1</name>
        <sequence type="displayed"/>
    </isoform>
    <isoform>
        <id>F4IBB2-2</id>
        <name>2</name>
        <sequence type="described" ref="VSP_056878"/>
    </isoform>
</comment>
<comment type="similarity">
    <text evidence="5">Belongs to the phosphoglycerate mutase family.</text>
</comment>
<comment type="sequence caution" evidence="5">
    <conflict type="erroneous initiation">
        <sequence resource="EMBL-CDS" id="AAF82259"/>
    </conflict>
    <text>Truncated N-terminus.</text>
</comment>
<organism>
    <name type="scientific">Arabidopsis thaliana</name>
    <name type="common">Mouse-ear cress</name>
    <dbReference type="NCBI Taxonomy" id="3702"/>
    <lineage>
        <taxon>Eukaryota</taxon>
        <taxon>Viridiplantae</taxon>
        <taxon>Streptophyta</taxon>
        <taxon>Embryophyta</taxon>
        <taxon>Tracheophyta</taxon>
        <taxon>Spermatophyta</taxon>
        <taxon>Magnoliopsida</taxon>
        <taxon>eudicotyledons</taxon>
        <taxon>Gunneridae</taxon>
        <taxon>Pentapetalae</taxon>
        <taxon>rosids</taxon>
        <taxon>malvids</taxon>
        <taxon>Brassicales</taxon>
        <taxon>Brassicaceae</taxon>
        <taxon>Camelineae</taxon>
        <taxon>Arabidopsis</taxon>
    </lineage>
</organism>
<gene>
    <name evidence="6" type="ordered locus">At1g58280</name>
    <name evidence="7" type="ORF">F19C14.10</name>
</gene>
<dbReference type="EMBL" id="AC008051">
    <property type="protein sequence ID" value="AAF82259.1"/>
    <property type="status" value="ALT_INIT"/>
    <property type="molecule type" value="Genomic_DNA"/>
</dbReference>
<dbReference type="EMBL" id="CP002684">
    <property type="protein sequence ID" value="AEE33528.1"/>
    <property type="molecule type" value="Genomic_DNA"/>
</dbReference>
<dbReference type="EMBL" id="CP002684">
    <property type="protein sequence ID" value="AEE33529.1"/>
    <property type="molecule type" value="Genomic_DNA"/>
</dbReference>
<dbReference type="EMBL" id="AK227327">
    <property type="protein sequence ID" value="BAE99341.1"/>
    <property type="molecule type" value="mRNA"/>
</dbReference>
<dbReference type="EMBL" id="AB028195">
    <property type="protein sequence ID" value="BAA87937.1"/>
    <property type="molecule type" value="mRNA"/>
</dbReference>
<dbReference type="PIR" id="D96616">
    <property type="entry name" value="D96616"/>
</dbReference>
<dbReference type="PIR" id="T52444">
    <property type="entry name" value="T52444"/>
</dbReference>
<dbReference type="RefSeq" id="NP_176124.2">
    <molecule id="F4IBB2-2"/>
    <property type="nucleotide sequence ID" value="NM_104608.4"/>
</dbReference>
<dbReference type="RefSeq" id="NP_849826.2">
    <molecule id="F4IBB2-1"/>
    <property type="nucleotide sequence ID" value="NM_179495.3"/>
</dbReference>
<dbReference type="FunCoup" id="F4IBB2">
    <property type="interactions" value="239"/>
</dbReference>
<dbReference type="STRING" id="3702.F4IBB2"/>
<dbReference type="iPTMnet" id="F4IBB2"/>
<dbReference type="PaxDb" id="3702-AT1G58280.2"/>
<dbReference type="ProteomicsDB" id="235074">
    <molecule id="F4IBB2-1"/>
</dbReference>
<dbReference type="DNASU" id="842197"/>
<dbReference type="EnsemblPlants" id="AT1G58280.1">
    <molecule id="F4IBB2-2"/>
    <property type="protein sequence ID" value="AT1G58280.1"/>
    <property type="gene ID" value="AT1G58280"/>
</dbReference>
<dbReference type="EnsemblPlants" id="AT1G58280.2">
    <molecule id="F4IBB2-1"/>
    <property type="protein sequence ID" value="AT1G58280.2"/>
    <property type="gene ID" value="AT1G58280"/>
</dbReference>
<dbReference type="GeneID" id="842197"/>
<dbReference type="Gramene" id="AT1G58280.1">
    <molecule id="F4IBB2-2"/>
    <property type="protein sequence ID" value="AT1G58280.1"/>
    <property type="gene ID" value="AT1G58280"/>
</dbReference>
<dbReference type="Gramene" id="AT1G58280.2">
    <molecule id="F4IBB2-1"/>
    <property type="protein sequence ID" value="AT1G58280.2"/>
    <property type="gene ID" value="AT1G58280"/>
</dbReference>
<dbReference type="KEGG" id="ath:AT1G58280"/>
<dbReference type="Araport" id="AT1G58280"/>
<dbReference type="TAIR" id="AT1G58280"/>
<dbReference type="eggNOG" id="KOG4754">
    <property type="taxonomic scope" value="Eukaryota"/>
</dbReference>
<dbReference type="InParanoid" id="F4IBB2"/>
<dbReference type="PhylomeDB" id="F4IBB2"/>
<dbReference type="PRO" id="PR:F4IBB2"/>
<dbReference type="Proteomes" id="UP000006548">
    <property type="component" value="Chromosome 1"/>
</dbReference>
<dbReference type="ExpressionAtlas" id="F4IBB2">
    <property type="expression patterns" value="baseline and differential"/>
</dbReference>
<dbReference type="GO" id="GO:0009507">
    <property type="term" value="C:chloroplast"/>
    <property type="evidence" value="ECO:0007005"/>
    <property type="project" value="TAIR"/>
</dbReference>
<dbReference type="CDD" id="cd07067">
    <property type="entry name" value="HP_PGM_like"/>
    <property type="match status" value="1"/>
</dbReference>
<dbReference type="Gene3D" id="3.40.50.1240">
    <property type="entry name" value="Phosphoglycerate mutase-like"/>
    <property type="match status" value="1"/>
</dbReference>
<dbReference type="InterPro" id="IPR013078">
    <property type="entry name" value="His_Pase_superF_clade-1"/>
</dbReference>
<dbReference type="InterPro" id="IPR029033">
    <property type="entry name" value="His_PPase_superfam"/>
</dbReference>
<dbReference type="InterPro" id="IPR050275">
    <property type="entry name" value="PGM_Phosphatase"/>
</dbReference>
<dbReference type="PANTHER" id="PTHR48100">
    <property type="entry name" value="BROAD-SPECIFICITY PHOSPHATASE YOR283W-RELATED"/>
    <property type="match status" value="1"/>
</dbReference>
<dbReference type="PANTHER" id="PTHR48100:SF1">
    <property type="entry name" value="HISTIDINE PHOSPHATASE FAMILY PROTEIN-RELATED"/>
    <property type="match status" value="1"/>
</dbReference>
<dbReference type="Pfam" id="PF00300">
    <property type="entry name" value="His_Phos_1"/>
    <property type="match status" value="1"/>
</dbReference>
<dbReference type="SMART" id="SM00855">
    <property type="entry name" value="PGAM"/>
    <property type="match status" value="1"/>
</dbReference>
<dbReference type="SUPFAM" id="SSF53254">
    <property type="entry name" value="Phosphoglycerate mutase-like"/>
    <property type="match status" value="1"/>
</dbReference>
<proteinExistence type="evidence at transcript level"/>
<sequence>MIHQSMTSNLSFYISSVSHLSSPLPSLSRLSLRCCSSLPAHDMETKPSQGLYPLHRCKTIHLVRHAQGIHNVEGEKNHKAYLSEDLFDAHLTPLGWQQVDNLHKHVNASGISNRIELVVVSPLLRTLQTAVGTFGGEGYKDGVNTPLLMTAGAGNSDRPAISRLNRPPFIAVESCREHLVCLLFYLLHDWHFLEMKTFAMFLVQGVHPCDRRSNITKYRELFPAIDFSLIETDEDVLWKPDIREEDKDIATRGVKFFNWLSTRKEKEIAVVTHSGFLYQTLNSFGNDCDPSVKNEISKKFVNCELRSFVLVDKCMSSSDPPMTNYPGTILTGEDASSDIADQK</sequence>